<comment type="function">
    <text evidence="1">Required for accurate and efficient protein synthesis under certain stress conditions. May act as a fidelity factor of the translation reaction, by catalyzing a one-codon backward translocation of tRNAs on improperly translocated ribosomes. Back-translocation proceeds from a post-translocation (POST) complex to a pre-translocation (PRE) complex, thus giving elongation factor G a second chance to translocate the tRNAs correctly. Binds to ribosomes in a GTP-dependent manner.</text>
</comment>
<comment type="catalytic activity">
    <reaction evidence="1">
        <text>GTP + H2O = GDP + phosphate + H(+)</text>
        <dbReference type="Rhea" id="RHEA:19669"/>
        <dbReference type="ChEBI" id="CHEBI:15377"/>
        <dbReference type="ChEBI" id="CHEBI:15378"/>
        <dbReference type="ChEBI" id="CHEBI:37565"/>
        <dbReference type="ChEBI" id="CHEBI:43474"/>
        <dbReference type="ChEBI" id="CHEBI:58189"/>
        <dbReference type="EC" id="3.6.5.n1"/>
    </reaction>
</comment>
<comment type="subcellular location">
    <subcellularLocation>
        <location evidence="1">Cell inner membrane</location>
        <topology evidence="1">Peripheral membrane protein</topology>
        <orientation evidence="1">Cytoplasmic side</orientation>
    </subcellularLocation>
</comment>
<comment type="similarity">
    <text evidence="1">Belongs to the TRAFAC class translation factor GTPase superfamily. Classic translation factor GTPase family. LepA subfamily.</text>
</comment>
<reference key="1">
    <citation type="submission" date="2008-02" db="EMBL/GenBank/DDBJ databases">
        <title>Complete sequence of Synechococcus sp. PCC 7002.</title>
        <authorList>
            <person name="Li T."/>
            <person name="Zhao J."/>
            <person name="Zhao C."/>
            <person name="Liu Z."/>
            <person name="Zhao F."/>
            <person name="Marquardt J."/>
            <person name="Nomura C.T."/>
            <person name="Persson S."/>
            <person name="Detter J.C."/>
            <person name="Richardson P.M."/>
            <person name="Lanz C."/>
            <person name="Schuster S.C."/>
            <person name="Wang J."/>
            <person name="Li S."/>
            <person name="Huang X."/>
            <person name="Cai T."/>
            <person name="Yu Z."/>
            <person name="Luo J."/>
            <person name="Zhao J."/>
            <person name="Bryant D.A."/>
        </authorList>
    </citation>
    <scope>NUCLEOTIDE SEQUENCE [LARGE SCALE GENOMIC DNA]</scope>
    <source>
        <strain>ATCC 27264 / PCC 7002 / PR-6</strain>
    </source>
</reference>
<proteinExistence type="inferred from homology"/>
<sequence>MTDVPVSRIRNFSIIAHIDHGKSTLADRMLQDTQTVAQRDMKEQFLDNMELERERGITIKLQAARMRYVAKDGEEYILNLIDTPGHVDFSYEVSRSLAACEGALLVVDASQGVEAQTLANVYLALDNNLEIIPVLNKIDLPGAEPDRVTEEIEEVVGLDCTDIIRASAKQGLGINDILESIVQQVPPPADTIDQPLRALIFDSYYDPYRGVIVYFRVMDGEVKKGDKVRLMASKKEYEIDELGVLAPNQVQVDALHAGEVGYFAAAIKSVEDARVGDTITSAVHPAPAPLPGYTEAKPMVFCGLFPTDADQYSDLRDALDKLKLNDAALSFEPETSSAMGFGFRCGFLGLLHLEIVQERLEREYNLDLITTAPSVVYRVTTTDGEVMEIDNPSQLPDPQKREKIEEPYIQVDVITPEEFVGTIMDLCQTRRGIFKDMKYFTESRTNIIYELPLAEVVTDFFDQLKSRTRGYASMEYQLIGYRVGQLVRLDILVNKDSVDSLAMIVHRDKAYNVGRAMAEKLKELIPRHQFKIPIQAAIGSKIIASEHIPALRKDVLAKCYGGDISRKKKLLQKQAKGKKRMKSIGTVDVPQEAFMAVLKLDQ</sequence>
<gene>
    <name evidence="1" type="primary">lepA</name>
    <name type="ordered locus">SYNPCC7002_A2421</name>
</gene>
<accession>B1XK44</accession>
<evidence type="ECO:0000255" key="1">
    <source>
        <dbReference type="HAMAP-Rule" id="MF_00071"/>
    </source>
</evidence>
<dbReference type="EC" id="3.6.5.n1" evidence="1"/>
<dbReference type="EMBL" id="CP000951">
    <property type="protein sequence ID" value="ACB00399.1"/>
    <property type="molecule type" value="Genomic_DNA"/>
</dbReference>
<dbReference type="RefSeq" id="WP_012308017.1">
    <property type="nucleotide sequence ID" value="NZ_JAHHPU010000003.1"/>
</dbReference>
<dbReference type="SMR" id="B1XK44"/>
<dbReference type="STRING" id="32049.SYNPCC7002_A2421"/>
<dbReference type="KEGG" id="syp:SYNPCC7002_A2421"/>
<dbReference type="eggNOG" id="COG0481">
    <property type="taxonomic scope" value="Bacteria"/>
</dbReference>
<dbReference type="HOGENOM" id="CLU_009995_3_3_3"/>
<dbReference type="Proteomes" id="UP000001688">
    <property type="component" value="Chromosome"/>
</dbReference>
<dbReference type="GO" id="GO:0005886">
    <property type="term" value="C:plasma membrane"/>
    <property type="evidence" value="ECO:0007669"/>
    <property type="project" value="UniProtKB-SubCell"/>
</dbReference>
<dbReference type="GO" id="GO:0005525">
    <property type="term" value="F:GTP binding"/>
    <property type="evidence" value="ECO:0007669"/>
    <property type="project" value="UniProtKB-KW"/>
</dbReference>
<dbReference type="GO" id="GO:0003924">
    <property type="term" value="F:GTPase activity"/>
    <property type="evidence" value="ECO:0007669"/>
    <property type="project" value="InterPro"/>
</dbReference>
<dbReference type="GO" id="GO:0043022">
    <property type="term" value="F:ribosome binding"/>
    <property type="evidence" value="ECO:0007669"/>
    <property type="project" value="TreeGrafter"/>
</dbReference>
<dbReference type="GO" id="GO:0045727">
    <property type="term" value="P:positive regulation of translation"/>
    <property type="evidence" value="ECO:0007669"/>
    <property type="project" value="TreeGrafter"/>
</dbReference>
<dbReference type="GO" id="GO:0006412">
    <property type="term" value="P:translation"/>
    <property type="evidence" value="ECO:0007669"/>
    <property type="project" value="UniProtKB-KW"/>
</dbReference>
<dbReference type="CDD" id="cd03699">
    <property type="entry name" value="EF4_II"/>
    <property type="match status" value="1"/>
</dbReference>
<dbReference type="CDD" id="cd16260">
    <property type="entry name" value="EF4_III"/>
    <property type="match status" value="1"/>
</dbReference>
<dbReference type="CDD" id="cd01890">
    <property type="entry name" value="LepA"/>
    <property type="match status" value="1"/>
</dbReference>
<dbReference type="CDD" id="cd03709">
    <property type="entry name" value="lepA_C"/>
    <property type="match status" value="1"/>
</dbReference>
<dbReference type="FunFam" id="3.40.50.300:FF:000078">
    <property type="entry name" value="Elongation factor 4"/>
    <property type="match status" value="1"/>
</dbReference>
<dbReference type="FunFam" id="2.40.30.10:FF:000015">
    <property type="entry name" value="Translation factor GUF1, mitochondrial"/>
    <property type="match status" value="1"/>
</dbReference>
<dbReference type="FunFam" id="3.30.70.240:FF:000007">
    <property type="entry name" value="Translation factor GUF1, mitochondrial"/>
    <property type="match status" value="1"/>
</dbReference>
<dbReference type="FunFam" id="3.30.70.2570:FF:000001">
    <property type="entry name" value="Translation factor GUF1, mitochondrial"/>
    <property type="match status" value="1"/>
</dbReference>
<dbReference type="FunFam" id="3.30.70.870:FF:000004">
    <property type="entry name" value="Translation factor GUF1, mitochondrial"/>
    <property type="match status" value="1"/>
</dbReference>
<dbReference type="Gene3D" id="3.30.70.240">
    <property type="match status" value="1"/>
</dbReference>
<dbReference type="Gene3D" id="3.30.70.2570">
    <property type="entry name" value="Elongation factor 4, C-terminal domain"/>
    <property type="match status" value="1"/>
</dbReference>
<dbReference type="Gene3D" id="3.30.70.870">
    <property type="entry name" value="Elongation Factor G (Translational Gtpase), domain 3"/>
    <property type="match status" value="1"/>
</dbReference>
<dbReference type="Gene3D" id="3.40.50.300">
    <property type="entry name" value="P-loop containing nucleotide triphosphate hydrolases"/>
    <property type="match status" value="1"/>
</dbReference>
<dbReference type="Gene3D" id="2.40.30.10">
    <property type="entry name" value="Translation factors"/>
    <property type="match status" value="1"/>
</dbReference>
<dbReference type="HAMAP" id="MF_03138">
    <property type="entry name" value="GUFP"/>
    <property type="match status" value="1"/>
</dbReference>
<dbReference type="HAMAP" id="MF_00071">
    <property type="entry name" value="LepA"/>
    <property type="match status" value="1"/>
</dbReference>
<dbReference type="InterPro" id="IPR006297">
    <property type="entry name" value="EF-4"/>
</dbReference>
<dbReference type="InterPro" id="IPR035647">
    <property type="entry name" value="EFG_III/V"/>
</dbReference>
<dbReference type="InterPro" id="IPR000640">
    <property type="entry name" value="EFG_V-like"/>
</dbReference>
<dbReference type="InterPro" id="IPR004161">
    <property type="entry name" value="EFTu-like_2"/>
</dbReference>
<dbReference type="InterPro" id="IPR031157">
    <property type="entry name" value="G_TR_CS"/>
</dbReference>
<dbReference type="InterPro" id="IPR027518">
    <property type="entry name" value="GUFP"/>
</dbReference>
<dbReference type="InterPro" id="IPR038363">
    <property type="entry name" value="LepA_C_sf"/>
</dbReference>
<dbReference type="InterPro" id="IPR013842">
    <property type="entry name" value="LepA_CTD"/>
</dbReference>
<dbReference type="InterPro" id="IPR035654">
    <property type="entry name" value="LepA_IV"/>
</dbReference>
<dbReference type="InterPro" id="IPR027417">
    <property type="entry name" value="P-loop_NTPase"/>
</dbReference>
<dbReference type="InterPro" id="IPR005225">
    <property type="entry name" value="Small_GTP-bd"/>
</dbReference>
<dbReference type="InterPro" id="IPR000795">
    <property type="entry name" value="T_Tr_GTP-bd_dom"/>
</dbReference>
<dbReference type="NCBIfam" id="TIGR01393">
    <property type="entry name" value="lepA"/>
    <property type="match status" value="1"/>
</dbReference>
<dbReference type="NCBIfam" id="TIGR00231">
    <property type="entry name" value="small_GTP"/>
    <property type="match status" value="1"/>
</dbReference>
<dbReference type="PANTHER" id="PTHR43512:SF4">
    <property type="entry name" value="TRANSLATION FACTOR GUF1 HOMOLOG, CHLOROPLASTIC"/>
    <property type="match status" value="1"/>
</dbReference>
<dbReference type="PANTHER" id="PTHR43512">
    <property type="entry name" value="TRANSLATION FACTOR GUF1-RELATED"/>
    <property type="match status" value="1"/>
</dbReference>
<dbReference type="Pfam" id="PF00679">
    <property type="entry name" value="EFG_C"/>
    <property type="match status" value="1"/>
</dbReference>
<dbReference type="Pfam" id="PF00009">
    <property type="entry name" value="GTP_EFTU"/>
    <property type="match status" value="1"/>
</dbReference>
<dbReference type="Pfam" id="PF03144">
    <property type="entry name" value="GTP_EFTU_D2"/>
    <property type="match status" value="1"/>
</dbReference>
<dbReference type="Pfam" id="PF06421">
    <property type="entry name" value="LepA_C"/>
    <property type="match status" value="1"/>
</dbReference>
<dbReference type="PRINTS" id="PR00315">
    <property type="entry name" value="ELONGATNFCT"/>
</dbReference>
<dbReference type="SMART" id="SM00838">
    <property type="entry name" value="EFG_C"/>
    <property type="match status" value="1"/>
</dbReference>
<dbReference type="SUPFAM" id="SSF54980">
    <property type="entry name" value="EF-G C-terminal domain-like"/>
    <property type="match status" value="2"/>
</dbReference>
<dbReference type="SUPFAM" id="SSF52540">
    <property type="entry name" value="P-loop containing nucleoside triphosphate hydrolases"/>
    <property type="match status" value="1"/>
</dbReference>
<dbReference type="PROSITE" id="PS00301">
    <property type="entry name" value="G_TR_1"/>
    <property type="match status" value="1"/>
</dbReference>
<dbReference type="PROSITE" id="PS51722">
    <property type="entry name" value="G_TR_2"/>
    <property type="match status" value="1"/>
</dbReference>
<keyword id="KW-0997">Cell inner membrane</keyword>
<keyword id="KW-1003">Cell membrane</keyword>
<keyword id="KW-0342">GTP-binding</keyword>
<keyword id="KW-0378">Hydrolase</keyword>
<keyword id="KW-0472">Membrane</keyword>
<keyword id="KW-0547">Nucleotide-binding</keyword>
<keyword id="KW-0648">Protein biosynthesis</keyword>
<keyword id="KW-1185">Reference proteome</keyword>
<name>LEPA_PICP2</name>
<feature type="chain" id="PRO_1000092455" description="Elongation factor 4">
    <location>
        <begin position="1"/>
        <end position="602"/>
    </location>
</feature>
<feature type="domain" description="tr-type G">
    <location>
        <begin position="7"/>
        <end position="189"/>
    </location>
</feature>
<feature type="binding site" evidence="1">
    <location>
        <begin position="19"/>
        <end position="24"/>
    </location>
    <ligand>
        <name>GTP</name>
        <dbReference type="ChEBI" id="CHEBI:37565"/>
    </ligand>
</feature>
<feature type="binding site" evidence="1">
    <location>
        <begin position="136"/>
        <end position="139"/>
    </location>
    <ligand>
        <name>GTP</name>
        <dbReference type="ChEBI" id="CHEBI:37565"/>
    </ligand>
</feature>
<protein>
    <recommendedName>
        <fullName evidence="1">Elongation factor 4</fullName>
        <shortName evidence="1">EF-4</shortName>
        <ecNumber evidence="1">3.6.5.n1</ecNumber>
    </recommendedName>
    <alternativeName>
        <fullName evidence="1">Ribosomal back-translocase LepA</fullName>
    </alternativeName>
</protein>
<organism>
    <name type="scientific">Picosynechococcus sp. (strain ATCC 27264 / PCC 7002 / PR-6)</name>
    <name type="common">Agmenellum quadruplicatum</name>
    <dbReference type="NCBI Taxonomy" id="32049"/>
    <lineage>
        <taxon>Bacteria</taxon>
        <taxon>Bacillati</taxon>
        <taxon>Cyanobacteriota</taxon>
        <taxon>Cyanophyceae</taxon>
        <taxon>Oscillatoriophycideae</taxon>
        <taxon>Chroococcales</taxon>
        <taxon>Geminocystaceae</taxon>
        <taxon>Picosynechococcus</taxon>
    </lineage>
</organism>